<proteinExistence type="evidence at transcript level"/>
<name>MTNB_BOVIN</name>
<feature type="chain" id="PRO_0000393742" description="Methylthioribulose-1-phosphate dehydratase">
    <location>
        <begin position="1"/>
        <end position="242"/>
    </location>
</feature>
<feature type="active site" description="Proton donor/acceptor" evidence="1">
    <location>
        <position position="139"/>
    </location>
</feature>
<feature type="binding site" evidence="1">
    <location>
        <position position="97"/>
    </location>
    <ligand>
        <name>substrate</name>
    </ligand>
</feature>
<feature type="binding site" evidence="1">
    <location>
        <position position="115"/>
    </location>
    <ligand>
        <name>Zn(2+)</name>
        <dbReference type="ChEBI" id="CHEBI:29105"/>
    </ligand>
</feature>
<feature type="binding site" evidence="1">
    <location>
        <position position="117"/>
    </location>
    <ligand>
        <name>Zn(2+)</name>
        <dbReference type="ChEBI" id="CHEBI:29105"/>
    </ligand>
</feature>
<feature type="binding site" evidence="1">
    <location>
        <position position="195"/>
    </location>
    <ligand>
        <name>Zn(2+)</name>
        <dbReference type="ChEBI" id="CHEBI:29105"/>
    </ligand>
</feature>
<keyword id="KW-0028">Amino-acid biosynthesis</keyword>
<keyword id="KW-0053">Apoptosis</keyword>
<keyword id="KW-0963">Cytoplasm</keyword>
<keyword id="KW-0456">Lyase</keyword>
<keyword id="KW-0479">Metal-binding</keyword>
<keyword id="KW-0486">Methionine biosynthesis</keyword>
<keyword id="KW-1185">Reference proteome</keyword>
<keyword id="KW-0862">Zinc</keyword>
<dbReference type="EC" id="4.2.1.109" evidence="1"/>
<dbReference type="EMBL" id="BC120140">
    <property type="protein sequence ID" value="AAI20141.1"/>
    <property type="molecule type" value="mRNA"/>
</dbReference>
<dbReference type="RefSeq" id="NP_001068820.1">
    <property type="nucleotide sequence ID" value="NM_001075352.2"/>
</dbReference>
<dbReference type="SMR" id="Q0VCJ2"/>
<dbReference type="FunCoup" id="Q0VCJ2">
    <property type="interactions" value="1939"/>
</dbReference>
<dbReference type="STRING" id="9913.ENSBTAP00000024300"/>
<dbReference type="PaxDb" id="9913-ENSBTAP00000024300"/>
<dbReference type="Ensembl" id="ENSBTAT00000024300.4">
    <property type="protein sequence ID" value="ENSBTAP00000024300.3"/>
    <property type="gene ID" value="ENSBTAG00000018257.4"/>
</dbReference>
<dbReference type="GeneID" id="508345"/>
<dbReference type="KEGG" id="bta:508345"/>
<dbReference type="CTD" id="51074"/>
<dbReference type="VEuPathDB" id="HostDB:ENSBTAG00000018257"/>
<dbReference type="VGNC" id="VGNC:26016">
    <property type="gene designation" value="APIP"/>
</dbReference>
<dbReference type="eggNOG" id="KOG2631">
    <property type="taxonomic scope" value="Eukaryota"/>
</dbReference>
<dbReference type="GeneTree" id="ENSGT00390000001680"/>
<dbReference type="HOGENOM" id="CLU_006033_4_0_1"/>
<dbReference type="InParanoid" id="Q0VCJ2"/>
<dbReference type="OMA" id="WFPGTSG"/>
<dbReference type="OrthoDB" id="191080at2759"/>
<dbReference type="TreeFam" id="TF105632"/>
<dbReference type="Reactome" id="R-BTA-111458">
    <property type="pathway name" value="Formation of apoptosome"/>
</dbReference>
<dbReference type="Reactome" id="R-BTA-9627069">
    <property type="pathway name" value="Regulation of the apoptosome activity"/>
</dbReference>
<dbReference type="UniPathway" id="UPA00904">
    <property type="reaction ID" value="UER00875"/>
</dbReference>
<dbReference type="Proteomes" id="UP000009136">
    <property type="component" value="Chromosome 15"/>
</dbReference>
<dbReference type="Bgee" id="ENSBTAG00000018257">
    <property type="expression patterns" value="Expressed in oocyte and 103 other cell types or tissues"/>
</dbReference>
<dbReference type="GO" id="GO:0005737">
    <property type="term" value="C:cytoplasm"/>
    <property type="evidence" value="ECO:0000250"/>
    <property type="project" value="UniProtKB"/>
</dbReference>
<dbReference type="GO" id="GO:0042802">
    <property type="term" value="F:identical protein binding"/>
    <property type="evidence" value="ECO:0007669"/>
    <property type="project" value="Ensembl"/>
</dbReference>
<dbReference type="GO" id="GO:0046570">
    <property type="term" value="F:methylthioribulose 1-phosphate dehydratase activity"/>
    <property type="evidence" value="ECO:0000250"/>
    <property type="project" value="UniProtKB"/>
</dbReference>
<dbReference type="GO" id="GO:0008270">
    <property type="term" value="F:zinc ion binding"/>
    <property type="evidence" value="ECO:0000250"/>
    <property type="project" value="UniProtKB"/>
</dbReference>
<dbReference type="GO" id="GO:0006915">
    <property type="term" value="P:apoptotic process"/>
    <property type="evidence" value="ECO:0007669"/>
    <property type="project" value="UniProtKB-KW"/>
</dbReference>
<dbReference type="GO" id="GO:0019509">
    <property type="term" value="P:L-methionine salvage from methylthioadenosine"/>
    <property type="evidence" value="ECO:0000250"/>
    <property type="project" value="UniProtKB"/>
</dbReference>
<dbReference type="GO" id="GO:0043066">
    <property type="term" value="P:negative regulation of apoptotic process"/>
    <property type="evidence" value="ECO:0000250"/>
    <property type="project" value="UniProtKB"/>
</dbReference>
<dbReference type="GO" id="GO:0051289">
    <property type="term" value="P:protein homotetramerization"/>
    <property type="evidence" value="ECO:0000250"/>
    <property type="project" value="UniProtKB"/>
</dbReference>
<dbReference type="GO" id="GO:0070269">
    <property type="term" value="P:pyroptotic inflammatory response"/>
    <property type="evidence" value="ECO:0000250"/>
    <property type="project" value="UniProtKB"/>
</dbReference>
<dbReference type="GO" id="GO:0070372">
    <property type="term" value="P:regulation of ERK1 and ERK2 cascade"/>
    <property type="evidence" value="ECO:0000250"/>
    <property type="project" value="UniProtKB"/>
</dbReference>
<dbReference type="FunFam" id="3.40.225.10:FF:000003">
    <property type="entry name" value="Methylthioribulose-1-phosphate dehydratase"/>
    <property type="match status" value="1"/>
</dbReference>
<dbReference type="Gene3D" id="3.40.225.10">
    <property type="entry name" value="Class II aldolase/adducin N-terminal domain"/>
    <property type="match status" value="1"/>
</dbReference>
<dbReference type="HAMAP" id="MF_03116">
    <property type="entry name" value="Salvage_MtnB_euk"/>
    <property type="match status" value="1"/>
</dbReference>
<dbReference type="InterPro" id="IPR001303">
    <property type="entry name" value="Aldolase_II/adducin_N"/>
</dbReference>
<dbReference type="InterPro" id="IPR036409">
    <property type="entry name" value="Aldolase_II/adducin_N_sf"/>
</dbReference>
<dbReference type="InterPro" id="IPR017714">
    <property type="entry name" value="MethylthioRu-1-P_deHdtase_MtnB"/>
</dbReference>
<dbReference type="InterPro" id="IPR027514">
    <property type="entry name" value="Salvage_MtnB_euk"/>
</dbReference>
<dbReference type="NCBIfam" id="TIGR03328">
    <property type="entry name" value="salvage_mtnB"/>
    <property type="match status" value="1"/>
</dbReference>
<dbReference type="PANTHER" id="PTHR10640">
    <property type="entry name" value="METHYLTHIORIBULOSE-1-PHOSPHATE DEHYDRATASE"/>
    <property type="match status" value="1"/>
</dbReference>
<dbReference type="PANTHER" id="PTHR10640:SF7">
    <property type="entry name" value="METHYLTHIORIBULOSE-1-PHOSPHATE DEHYDRATASE"/>
    <property type="match status" value="1"/>
</dbReference>
<dbReference type="Pfam" id="PF00596">
    <property type="entry name" value="Aldolase_II"/>
    <property type="match status" value="1"/>
</dbReference>
<dbReference type="SMART" id="SM01007">
    <property type="entry name" value="Aldolase_II"/>
    <property type="match status" value="1"/>
</dbReference>
<dbReference type="SUPFAM" id="SSF53639">
    <property type="entry name" value="AraD/HMP-PK domain-like"/>
    <property type="match status" value="1"/>
</dbReference>
<reference key="1">
    <citation type="submission" date="2006-08" db="EMBL/GenBank/DDBJ databases">
        <authorList>
            <consortium name="NIH - Mammalian Gene Collection (MGC) project"/>
        </authorList>
    </citation>
    <scope>NUCLEOTIDE SEQUENCE [LARGE SCALE MRNA]</scope>
    <source>
        <strain>Hereford</strain>
        <tissue>Thymus</tissue>
    </source>
</reference>
<sequence length="242" mass="27095">MSGSHAPEGDCCLRQCRAQDKEHPRYLIPELCKQFYHLGWVTGTGGGISLKHGNEIYIAPSGVQKERIQPEDMFVCDINEKDISGPPPSKNLKKSQCTPLFMNAYTMREAGAVIHTHSKAAVMATLVFPGKEFKITHQEMIKGIKKCTSGGYYRYDDMLVVPIIENTPEEKDLKERMARAVNDYPDSCAVLVRRHGVYVWGETWEKAKTMCECYDYLFDVAVSMKQAGLDPAQLPAGENGIV</sequence>
<evidence type="ECO:0000255" key="1">
    <source>
        <dbReference type="HAMAP-Rule" id="MF_03116"/>
    </source>
</evidence>
<organism>
    <name type="scientific">Bos taurus</name>
    <name type="common">Bovine</name>
    <dbReference type="NCBI Taxonomy" id="9913"/>
    <lineage>
        <taxon>Eukaryota</taxon>
        <taxon>Metazoa</taxon>
        <taxon>Chordata</taxon>
        <taxon>Craniata</taxon>
        <taxon>Vertebrata</taxon>
        <taxon>Euteleostomi</taxon>
        <taxon>Mammalia</taxon>
        <taxon>Eutheria</taxon>
        <taxon>Laurasiatheria</taxon>
        <taxon>Artiodactyla</taxon>
        <taxon>Ruminantia</taxon>
        <taxon>Pecora</taxon>
        <taxon>Bovidae</taxon>
        <taxon>Bovinae</taxon>
        <taxon>Bos</taxon>
    </lineage>
</organism>
<gene>
    <name evidence="1" type="primary">APIP</name>
</gene>
<protein>
    <recommendedName>
        <fullName evidence="1">Methylthioribulose-1-phosphate dehydratase</fullName>
        <shortName evidence="1">MTRu-1-P dehydratase</shortName>
        <ecNumber evidence="1">4.2.1.109</ecNumber>
    </recommendedName>
    <alternativeName>
        <fullName evidence="1">APAF1-interacting protein</fullName>
    </alternativeName>
</protein>
<comment type="function">
    <text evidence="1">Catalyzes the dehydration of methylthioribulose-1-phosphate (MTRu-1-P) into 2,3-diketo-5-methylthiopentyl-1-phosphate (DK-MTP-1-P). Functions in the methionine salvage pathway, which plays a key role in cancer, apoptosis, microbial proliferation and inflammation. May inhibit the CASP1-related inflammatory response (pyroptosis), the CASP9-dependent apoptotic pathway and the cytochrome c-dependent and APAF1-mediated cell death.</text>
</comment>
<comment type="catalytic activity">
    <reaction evidence="1">
        <text>5-(methylsulfanyl)-D-ribulose 1-phosphate = 5-methylsulfanyl-2,3-dioxopentyl phosphate + H2O</text>
        <dbReference type="Rhea" id="RHEA:15549"/>
        <dbReference type="ChEBI" id="CHEBI:15377"/>
        <dbReference type="ChEBI" id="CHEBI:58548"/>
        <dbReference type="ChEBI" id="CHEBI:58828"/>
        <dbReference type="EC" id="4.2.1.109"/>
    </reaction>
</comment>
<comment type="cofactor">
    <cofactor evidence="1">
        <name>Zn(2+)</name>
        <dbReference type="ChEBI" id="CHEBI:29105"/>
    </cofactor>
    <text evidence="1">Binds 1 zinc ion per subunit.</text>
</comment>
<comment type="pathway">
    <text evidence="1">Amino-acid biosynthesis; L-methionine biosynthesis via salvage pathway; L-methionine from S-methyl-5-thio-alpha-D-ribose 1-phosphate: step 2/6.</text>
</comment>
<comment type="subunit">
    <text evidence="1">Homotetramer. Interacts with APAF1. May interact with CASP1.</text>
</comment>
<comment type="subcellular location">
    <subcellularLocation>
        <location evidence="1">Cytoplasm</location>
    </subcellularLocation>
</comment>
<comment type="similarity">
    <text evidence="1">Belongs to the aldolase class II family. MtnB subfamily.</text>
</comment>
<accession>Q0VCJ2</accession>